<gene>
    <name type="primary">NGFR</name>
    <name type="synonym">TNFRSF16</name>
</gene>
<dbReference type="EMBL" id="M14764">
    <property type="protein sequence ID" value="AAB59544.1"/>
    <property type="molecule type" value="mRNA"/>
</dbReference>
<dbReference type="EMBL" id="AK303278">
    <property type="protein sequence ID" value="BAG64358.1"/>
    <property type="molecule type" value="mRNA"/>
</dbReference>
<dbReference type="EMBL" id="AK313654">
    <property type="protein sequence ID" value="BAG36408.1"/>
    <property type="molecule type" value="mRNA"/>
</dbReference>
<dbReference type="EMBL" id="AC006487">
    <property type="status" value="NOT_ANNOTATED_CDS"/>
    <property type="molecule type" value="Genomic_DNA"/>
</dbReference>
<dbReference type="EMBL" id="AC015656">
    <property type="status" value="NOT_ANNOTATED_CDS"/>
    <property type="molecule type" value="Genomic_DNA"/>
</dbReference>
<dbReference type="EMBL" id="CH471109">
    <property type="protein sequence ID" value="EAW94677.1"/>
    <property type="molecule type" value="Genomic_DNA"/>
</dbReference>
<dbReference type="EMBL" id="BC050309">
    <property type="protein sequence ID" value="AAH50309.1"/>
    <property type="molecule type" value="mRNA"/>
</dbReference>
<dbReference type="EMBL" id="M21621">
    <property type="protein sequence ID" value="AAA36363.1"/>
    <property type="molecule type" value="Genomic_DNA"/>
</dbReference>
<dbReference type="CCDS" id="CCDS11549.1">
    <molecule id="P08138-1"/>
</dbReference>
<dbReference type="PIR" id="A25218">
    <property type="entry name" value="GQHUN"/>
</dbReference>
<dbReference type="RefSeq" id="NP_002498.1">
    <molecule id="P08138-1"/>
    <property type="nucleotide sequence ID" value="NM_002507.4"/>
</dbReference>
<dbReference type="PDB" id="2N80">
    <property type="method" value="NMR"/>
    <property type="chains" value="A=334-427"/>
</dbReference>
<dbReference type="PDB" id="2N83">
    <property type="method" value="NMR"/>
    <property type="chains" value="A=330-427"/>
</dbReference>
<dbReference type="PDB" id="2N97">
    <property type="method" value="NMR"/>
    <property type="chains" value="A/B=330-427"/>
</dbReference>
<dbReference type="PDB" id="3EWV">
    <property type="method" value="X-ray"/>
    <property type="resolution" value="2.60 A"/>
    <property type="chains" value="E=396-412"/>
</dbReference>
<dbReference type="PDB" id="5ZGG">
    <property type="method" value="NMR"/>
    <property type="chains" value="A/B=244-277"/>
</dbReference>
<dbReference type="PDB" id="7CSQ">
    <property type="method" value="NMR"/>
    <property type="chains" value="A=330-427"/>
</dbReference>
<dbReference type="PDB" id="8X8T">
    <property type="method" value="NMR"/>
    <property type="chains" value="B=273-332"/>
</dbReference>
<dbReference type="PDBsum" id="2N80"/>
<dbReference type="PDBsum" id="2N83"/>
<dbReference type="PDBsum" id="2N97"/>
<dbReference type="PDBsum" id="3EWV"/>
<dbReference type="PDBsum" id="5ZGG"/>
<dbReference type="PDBsum" id="7CSQ"/>
<dbReference type="PDBsum" id="8X8T"/>
<dbReference type="BMRB" id="P08138"/>
<dbReference type="SMR" id="P08138"/>
<dbReference type="BioGRID" id="110870">
    <property type="interactions" value="59"/>
</dbReference>
<dbReference type="CORUM" id="P08138"/>
<dbReference type="DIP" id="DIP-406N"/>
<dbReference type="FunCoup" id="P08138">
    <property type="interactions" value="1219"/>
</dbReference>
<dbReference type="IntAct" id="P08138">
    <property type="interactions" value="29"/>
</dbReference>
<dbReference type="MINT" id="P08138"/>
<dbReference type="STRING" id="9606.ENSP00000172229"/>
<dbReference type="BindingDB" id="P08138"/>
<dbReference type="ChEMBL" id="CHEMBL4762"/>
<dbReference type="DrugBank" id="DB13926">
    <property type="generic name" value="Cenegermin"/>
</dbReference>
<dbReference type="DrugCentral" id="P08138"/>
<dbReference type="GuidetoPHARMACOLOGY" id="1888"/>
<dbReference type="TCDB" id="9.B.87.4.1">
    <property type="family name" value="the selenoprotein p receptor (selp-receptor) family"/>
</dbReference>
<dbReference type="GlyConnect" id="611">
    <property type="glycosylation" value="3 N-Linked glycans (1 site), 2 O-Linked glycans"/>
</dbReference>
<dbReference type="GlyCosmos" id="P08138">
    <property type="glycosylation" value="1 site, 10 glycans"/>
</dbReference>
<dbReference type="GlyGen" id="P08138">
    <property type="glycosylation" value="2 sites, 4 O-linked glycans (1 site)"/>
</dbReference>
<dbReference type="iPTMnet" id="P08138"/>
<dbReference type="PhosphoSitePlus" id="P08138"/>
<dbReference type="SwissPalm" id="P08138"/>
<dbReference type="BioMuta" id="NGFR"/>
<dbReference type="DMDM" id="128156"/>
<dbReference type="jPOST" id="P08138"/>
<dbReference type="MassIVE" id="P08138"/>
<dbReference type="PaxDb" id="9606-ENSP00000172229"/>
<dbReference type="PeptideAtlas" id="P08138"/>
<dbReference type="ProteomicsDB" id="52073">
    <molecule id="P08138-1"/>
</dbReference>
<dbReference type="ProteomicsDB" id="5660"/>
<dbReference type="Antibodypedia" id="1461">
    <property type="antibodies" value="1677 antibodies from 49 providers"/>
</dbReference>
<dbReference type="DNASU" id="4804"/>
<dbReference type="Ensembl" id="ENST00000172229.8">
    <molecule id="P08138-1"/>
    <property type="protein sequence ID" value="ENSP00000172229.3"/>
    <property type="gene ID" value="ENSG00000064300.9"/>
</dbReference>
<dbReference type="Ensembl" id="ENST00000504201.1">
    <molecule id="P08138-2"/>
    <property type="protein sequence ID" value="ENSP00000421731.1"/>
    <property type="gene ID" value="ENSG00000064300.9"/>
</dbReference>
<dbReference type="GeneID" id="4804"/>
<dbReference type="KEGG" id="hsa:4804"/>
<dbReference type="MANE-Select" id="ENST00000172229.8">
    <property type="protein sequence ID" value="ENSP00000172229.3"/>
    <property type="RefSeq nucleotide sequence ID" value="NM_002507.4"/>
    <property type="RefSeq protein sequence ID" value="NP_002498.1"/>
</dbReference>
<dbReference type="UCSC" id="uc002ioz.5">
    <molecule id="P08138-1"/>
    <property type="organism name" value="human"/>
</dbReference>
<dbReference type="AGR" id="HGNC:7809"/>
<dbReference type="CTD" id="4804"/>
<dbReference type="DisGeNET" id="4804"/>
<dbReference type="GeneCards" id="NGFR"/>
<dbReference type="HGNC" id="HGNC:7809">
    <property type="gene designation" value="NGFR"/>
</dbReference>
<dbReference type="HPA" id="ENSG00000064300">
    <property type="expression patterns" value="Low tissue specificity"/>
</dbReference>
<dbReference type="MIM" id="162010">
    <property type="type" value="gene"/>
</dbReference>
<dbReference type="neXtProt" id="NX_P08138"/>
<dbReference type="OpenTargets" id="ENSG00000064300"/>
<dbReference type="PharmGKB" id="PA31615"/>
<dbReference type="VEuPathDB" id="HostDB:ENSG00000064300"/>
<dbReference type="eggNOG" id="ENOG502QWPN">
    <property type="taxonomic scope" value="Eukaryota"/>
</dbReference>
<dbReference type="GeneTree" id="ENSGT00730000110974"/>
<dbReference type="HOGENOM" id="CLU_052667_0_1_1"/>
<dbReference type="InParanoid" id="P08138"/>
<dbReference type="OMA" id="YSCQDKQ"/>
<dbReference type="OrthoDB" id="10048028at2759"/>
<dbReference type="PAN-GO" id="P08138">
    <property type="GO annotations" value="6 GO annotations based on evolutionary models"/>
</dbReference>
<dbReference type="PhylomeDB" id="P08138"/>
<dbReference type="TreeFam" id="TF106466"/>
<dbReference type="PathwayCommons" id="P08138"/>
<dbReference type="Reactome" id="R-HSA-193634">
    <property type="pathway name" value="Axonal growth inhibition (RHOA activation)"/>
</dbReference>
<dbReference type="Reactome" id="R-HSA-193648">
    <property type="pathway name" value="NRAGE signals death through JNK"/>
</dbReference>
<dbReference type="Reactome" id="R-HSA-193670">
    <property type="pathway name" value="p75NTR negatively regulates cell cycle via SC1"/>
</dbReference>
<dbReference type="Reactome" id="R-HSA-193681">
    <property type="pathway name" value="Ceramide signalling"/>
</dbReference>
<dbReference type="Reactome" id="R-HSA-193692">
    <property type="pathway name" value="Regulated proteolysis of p75NTR"/>
</dbReference>
<dbReference type="Reactome" id="R-HSA-205017">
    <property type="pathway name" value="NFG and proNGF binds to p75NTR"/>
</dbReference>
<dbReference type="Reactome" id="R-HSA-205025">
    <property type="pathway name" value="NADE modulates death signalling"/>
</dbReference>
<dbReference type="Reactome" id="R-HSA-205043">
    <property type="pathway name" value="NRIF signals cell death from the nucleus"/>
</dbReference>
<dbReference type="Reactome" id="R-HSA-209543">
    <property type="pathway name" value="p75NTR recruits signalling complexes"/>
</dbReference>
<dbReference type="Reactome" id="R-HSA-209560">
    <property type="pathway name" value="NF-kB is activated and signals survival"/>
</dbReference>
<dbReference type="Reactome" id="R-HSA-209563">
    <property type="pathway name" value="Axonal growth stimulation"/>
</dbReference>
<dbReference type="SignaLink" id="P08138"/>
<dbReference type="SIGNOR" id="P08138"/>
<dbReference type="BioGRID-ORCS" id="4804">
    <property type="hits" value="14 hits in 1151 CRISPR screens"/>
</dbReference>
<dbReference type="ChiTaRS" id="NGFR">
    <property type="organism name" value="human"/>
</dbReference>
<dbReference type="EvolutionaryTrace" id="P08138"/>
<dbReference type="GeneWiki" id="Low-affinity_nerve_growth_factor_receptor"/>
<dbReference type="GenomeRNAi" id="4804"/>
<dbReference type="Pharos" id="P08138">
    <property type="development level" value="Tclin"/>
</dbReference>
<dbReference type="PRO" id="PR:P08138"/>
<dbReference type="Proteomes" id="UP000005640">
    <property type="component" value="Chromosome 17"/>
</dbReference>
<dbReference type="RNAct" id="P08138">
    <property type="molecule type" value="protein"/>
</dbReference>
<dbReference type="Bgee" id="ENSG00000064300">
    <property type="expression patterns" value="Expressed in tibial nerve and 121 other cell types or tissues"/>
</dbReference>
<dbReference type="GO" id="GO:0009986">
    <property type="term" value="C:cell surface"/>
    <property type="evidence" value="ECO:0000250"/>
    <property type="project" value="BHF-UCL"/>
</dbReference>
<dbReference type="GO" id="GO:0005911">
    <property type="term" value="C:cell-cell junction"/>
    <property type="evidence" value="ECO:0007669"/>
    <property type="project" value="Ensembl"/>
</dbReference>
<dbReference type="GO" id="GO:0005829">
    <property type="term" value="C:cytosol"/>
    <property type="evidence" value="ECO:0000304"/>
    <property type="project" value="Reactome"/>
</dbReference>
<dbReference type="GO" id="GO:0043197">
    <property type="term" value="C:dendritic spine"/>
    <property type="evidence" value="ECO:0007669"/>
    <property type="project" value="UniProtKB-SubCell"/>
</dbReference>
<dbReference type="GO" id="GO:0005768">
    <property type="term" value="C:endosome"/>
    <property type="evidence" value="ECO:0000304"/>
    <property type="project" value="Reactome"/>
</dbReference>
<dbReference type="GO" id="GO:0005576">
    <property type="term" value="C:extracellular region"/>
    <property type="evidence" value="ECO:0000304"/>
    <property type="project" value="Reactome"/>
</dbReference>
<dbReference type="GO" id="GO:0030426">
    <property type="term" value="C:growth cone"/>
    <property type="evidence" value="ECO:0007669"/>
    <property type="project" value="UniProtKB-SubCell"/>
</dbReference>
<dbReference type="GO" id="GO:0016020">
    <property type="term" value="C:membrane"/>
    <property type="evidence" value="ECO:0000303"/>
    <property type="project" value="ARUK-UCL"/>
</dbReference>
<dbReference type="GO" id="GO:0031594">
    <property type="term" value="C:neuromuscular junction"/>
    <property type="evidence" value="ECO:0007669"/>
    <property type="project" value="Ensembl"/>
</dbReference>
<dbReference type="GO" id="GO:0005654">
    <property type="term" value="C:nucleoplasm"/>
    <property type="evidence" value="ECO:0000314"/>
    <property type="project" value="HPA"/>
</dbReference>
<dbReference type="GO" id="GO:0043204">
    <property type="term" value="C:perikaryon"/>
    <property type="evidence" value="ECO:0007669"/>
    <property type="project" value="UniProtKB-SubCell"/>
</dbReference>
<dbReference type="GO" id="GO:0005886">
    <property type="term" value="C:plasma membrane"/>
    <property type="evidence" value="ECO:0000314"/>
    <property type="project" value="HPA"/>
</dbReference>
<dbReference type="GO" id="GO:0014069">
    <property type="term" value="C:postsynaptic density"/>
    <property type="evidence" value="ECO:0007669"/>
    <property type="project" value="Ensembl"/>
</dbReference>
<dbReference type="GO" id="GO:0098793">
    <property type="term" value="C:presynapse"/>
    <property type="evidence" value="ECO:0007669"/>
    <property type="project" value="GOC"/>
</dbReference>
<dbReference type="GO" id="GO:0001540">
    <property type="term" value="F:amyloid-beta binding"/>
    <property type="evidence" value="ECO:0000304"/>
    <property type="project" value="ARUK-UCL"/>
</dbReference>
<dbReference type="GO" id="GO:0005516">
    <property type="term" value="F:calmodulin binding"/>
    <property type="evidence" value="ECO:0000314"/>
    <property type="project" value="UniProtKB"/>
</dbReference>
<dbReference type="GO" id="GO:0015026">
    <property type="term" value="F:coreceptor activity"/>
    <property type="evidence" value="ECO:0000314"/>
    <property type="project" value="UniProtKB"/>
</dbReference>
<dbReference type="GO" id="GO:0005035">
    <property type="term" value="F:death receptor activity"/>
    <property type="evidence" value="ECO:0000316"/>
    <property type="project" value="ARUK-UCL"/>
</dbReference>
<dbReference type="GO" id="GO:0048406">
    <property type="term" value="F:nerve growth factor binding"/>
    <property type="evidence" value="ECO:0000250"/>
    <property type="project" value="UniProtKB"/>
</dbReference>
<dbReference type="GO" id="GO:0043121">
    <property type="term" value="F:neurotrophin binding"/>
    <property type="evidence" value="ECO:0000250"/>
    <property type="project" value="UniProtKB"/>
</dbReference>
<dbReference type="GO" id="GO:0038023">
    <property type="term" value="F:signaling receptor activity"/>
    <property type="evidence" value="ECO:0000304"/>
    <property type="project" value="ProtInc"/>
</dbReference>
<dbReference type="GO" id="GO:0031267">
    <property type="term" value="F:small GTPase binding"/>
    <property type="evidence" value="ECO:0000250"/>
    <property type="project" value="UniProtKB"/>
</dbReference>
<dbReference type="GO" id="GO:0004888">
    <property type="term" value="F:transmembrane signaling receptor activity"/>
    <property type="evidence" value="ECO:0000304"/>
    <property type="project" value="ProtInc"/>
</dbReference>
<dbReference type="GO" id="GO:0031625">
    <property type="term" value="F:ubiquitin protein ligase binding"/>
    <property type="evidence" value="ECO:0000353"/>
    <property type="project" value="UniProtKB"/>
</dbReference>
<dbReference type="GO" id="GO:0007411">
    <property type="term" value="P:axon guidance"/>
    <property type="evidence" value="ECO:0007669"/>
    <property type="project" value="Ensembl"/>
</dbReference>
<dbReference type="GO" id="GO:1904646">
    <property type="term" value="P:cellular response to amyloid-beta"/>
    <property type="evidence" value="ECO:0000314"/>
    <property type="project" value="ARUK-UCL"/>
</dbReference>
<dbReference type="GO" id="GO:0007417">
    <property type="term" value="P:central nervous system development"/>
    <property type="evidence" value="ECO:0007669"/>
    <property type="project" value="Ensembl"/>
</dbReference>
<dbReference type="GO" id="GO:0032922">
    <property type="term" value="P:circadian regulation of gene expression"/>
    <property type="evidence" value="ECO:0000250"/>
    <property type="project" value="UniProtKB"/>
</dbReference>
<dbReference type="GO" id="GO:0016048">
    <property type="term" value="P:detection of temperature stimulus"/>
    <property type="evidence" value="ECO:0007669"/>
    <property type="project" value="Ensembl"/>
</dbReference>
<dbReference type="GO" id="GO:0035907">
    <property type="term" value="P:dorsal aorta development"/>
    <property type="evidence" value="ECO:0007669"/>
    <property type="project" value="Ensembl"/>
</dbReference>
<dbReference type="GO" id="GO:0097191">
    <property type="term" value="P:extrinsic apoptotic signaling pathway"/>
    <property type="evidence" value="ECO:0000314"/>
    <property type="project" value="BHF-UCL"/>
</dbReference>
<dbReference type="GO" id="GO:0008543">
    <property type="term" value="P:fibroblast growth factor receptor signaling pathway"/>
    <property type="evidence" value="ECO:0007669"/>
    <property type="project" value="Ensembl"/>
</dbReference>
<dbReference type="GO" id="GO:0048144">
    <property type="term" value="P:fibroblast proliferation"/>
    <property type="evidence" value="ECO:0007669"/>
    <property type="project" value="Ensembl"/>
</dbReference>
<dbReference type="GO" id="GO:0042593">
    <property type="term" value="P:glucose homeostasis"/>
    <property type="evidence" value="ECO:0000250"/>
    <property type="project" value="UniProtKB"/>
</dbReference>
<dbReference type="GO" id="GO:0031069">
    <property type="term" value="P:hair follicle morphogenesis"/>
    <property type="evidence" value="ECO:0007669"/>
    <property type="project" value="Ensembl"/>
</dbReference>
<dbReference type="GO" id="GO:0001678">
    <property type="term" value="P:intracellular glucose homeostasis"/>
    <property type="evidence" value="ECO:0000250"/>
    <property type="project" value="UniProtKB"/>
</dbReference>
<dbReference type="GO" id="GO:0006886">
    <property type="term" value="P:intracellular protein transport"/>
    <property type="evidence" value="ECO:0000250"/>
    <property type="project" value="UniProtKB"/>
</dbReference>
<dbReference type="GO" id="GO:1903588">
    <property type="term" value="P:negative regulation of blood vessel endothelial cell proliferation involved in sprouting angiogenesis"/>
    <property type="evidence" value="ECO:0000316"/>
    <property type="project" value="BHF-UCL"/>
</dbReference>
<dbReference type="GO" id="GO:0030336">
    <property type="term" value="P:negative regulation of cell migration"/>
    <property type="evidence" value="ECO:0000315"/>
    <property type="project" value="ARUK-UCL"/>
</dbReference>
<dbReference type="GO" id="GO:0040037">
    <property type="term" value="P:negative regulation of fibroblast growth factor receptor signaling pathway"/>
    <property type="evidence" value="ECO:0007669"/>
    <property type="project" value="Ensembl"/>
</dbReference>
<dbReference type="GO" id="GO:0051799">
    <property type="term" value="P:negative regulation of hair follicle development"/>
    <property type="evidence" value="ECO:0007669"/>
    <property type="project" value="Ensembl"/>
</dbReference>
<dbReference type="GO" id="GO:0021675">
    <property type="term" value="P:nerve development"/>
    <property type="evidence" value="ECO:0007669"/>
    <property type="project" value="Ensembl"/>
</dbReference>
<dbReference type="GO" id="GO:0051402">
    <property type="term" value="P:neuron apoptotic process"/>
    <property type="evidence" value="ECO:0000316"/>
    <property type="project" value="ARUK-UCL"/>
</dbReference>
<dbReference type="GO" id="GO:0042475">
    <property type="term" value="P:odontogenesis of dentin-containing tooth"/>
    <property type="evidence" value="ECO:0007669"/>
    <property type="project" value="Ensembl"/>
</dbReference>
<dbReference type="GO" id="GO:2001235">
    <property type="term" value="P:positive regulation of apoptotic signaling pathway"/>
    <property type="evidence" value="ECO:0007669"/>
    <property type="project" value="Ensembl"/>
</dbReference>
<dbReference type="GO" id="GO:2000353">
    <property type="term" value="P:positive regulation of endothelial cell apoptotic process"/>
    <property type="evidence" value="ECO:0000315"/>
    <property type="project" value="BHF-UCL"/>
</dbReference>
<dbReference type="GO" id="GO:0048146">
    <property type="term" value="P:positive regulation of fibroblast proliferation"/>
    <property type="evidence" value="ECO:0007669"/>
    <property type="project" value="Ensembl"/>
</dbReference>
<dbReference type="GO" id="GO:1902895">
    <property type="term" value="P:positive regulation of miRNA transcription"/>
    <property type="evidence" value="ECO:0000314"/>
    <property type="project" value="BHF-UCL"/>
</dbReference>
<dbReference type="GO" id="GO:0042488">
    <property type="term" value="P:positive regulation of odontogenesis of dentin-containing tooth"/>
    <property type="evidence" value="ECO:0007669"/>
    <property type="project" value="Ensembl"/>
</dbReference>
<dbReference type="GO" id="GO:1900182">
    <property type="term" value="P:positive regulation of protein localization to nucleus"/>
    <property type="evidence" value="ECO:0000314"/>
    <property type="project" value="BHF-UCL"/>
</dbReference>
<dbReference type="GO" id="GO:0099171">
    <property type="term" value="P:presynaptic modulation of chemical synaptic transmission"/>
    <property type="evidence" value="ECO:0007669"/>
    <property type="project" value="Ensembl"/>
</dbReference>
<dbReference type="GO" id="GO:0007266">
    <property type="term" value="P:Rho protein signal transduction"/>
    <property type="evidence" value="ECO:0000314"/>
    <property type="project" value="UniProtKB"/>
</dbReference>
<dbReference type="CDD" id="cd08311">
    <property type="entry name" value="Death_p75NR"/>
    <property type="match status" value="1"/>
</dbReference>
<dbReference type="CDD" id="cd13416">
    <property type="entry name" value="TNFRSF16"/>
    <property type="match status" value="1"/>
</dbReference>
<dbReference type="FunFam" id="2.10.50.10:FF:000013">
    <property type="entry name" value="Tumor necrosis factor receptor superfamily member 16"/>
    <property type="match status" value="1"/>
</dbReference>
<dbReference type="FunFam" id="1.10.533.10:FF:000034">
    <property type="entry name" value="tumor necrosis factor receptor superfamily member 16"/>
    <property type="match status" value="1"/>
</dbReference>
<dbReference type="FunFam" id="2.10.50.10:FF:000012">
    <property type="entry name" value="tumor necrosis factor receptor superfamily member 16"/>
    <property type="match status" value="1"/>
</dbReference>
<dbReference type="FunFam" id="2.10.50.10:FF:000027">
    <property type="entry name" value="tumor necrosis factor receptor superfamily member 16"/>
    <property type="match status" value="1"/>
</dbReference>
<dbReference type="Gene3D" id="6.10.250.1780">
    <property type="match status" value="1"/>
</dbReference>
<dbReference type="Gene3D" id="1.10.533.10">
    <property type="entry name" value="Death Domain, Fas"/>
    <property type="match status" value="1"/>
</dbReference>
<dbReference type="Gene3D" id="2.10.50.10">
    <property type="entry name" value="Tumor Necrosis Factor Receptor, subunit A, domain 2"/>
    <property type="match status" value="4"/>
</dbReference>
<dbReference type="InterPro" id="IPR011029">
    <property type="entry name" value="DEATH-like_dom_sf"/>
</dbReference>
<dbReference type="InterPro" id="IPR000488">
    <property type="entry name" value="Death_dom"/>
</dbReference>
<dbReference type="InterPro" id="IPR052302">
    <property type="entry name" value="Neurotrophin_rcpt-DD"/>
</dbReference>
<dbReference type="InterPro" id="IPR001368">
    <property type="entry name" value="TNFR/NGFR_Cys_rich_reg"/>
</dbReference>
<dbReference type="InterPro" id="IPR041448">
    <property type="entry name" value="TNFR16_TM"/>
</dbReference>
<dbReference type="InterPro" id="IPR022325">
    <property type="entry name" value="TNFR_16"/>
</dbReference>
<dbReference type="InterPro" id="IPR034046">
    <property type="entry name" value="TNFRSF16_N"/>
</dbReference>
<dbReference type="PANTHER" id="PTHR46605">
    <property type="entry name" value="TUMOR NECROSIS FACTOR RECEPTOR"/>
    <property type="match status" value="1"/>
</dbReference>
<dbReference type="PANTHER" id="PTHR46605:SF3">
    <property type="entry name" value="TUMOR NECROSIS FACTOR RECEPTOR SUPERFAMILY MEMBER 16"/>
    <property type="match status" value="1"/>
</dbReference>
<dbReference type="Pfam" id="PF00531">
    <property type="entry name" value="Death"/>
    <property type="match status" value="1"/>
</dbReference>
<dbReference type="Pfam" id="PF18422">
    <property type="entry name" value="TNFR_16_TM"/>
    <property type="match status" value="1"/>
</dbReference>
<dbReference type="Pfam" id="PF00020">
    <property type="entry name" value="TNFR_c6"/>
    <property type="match status" value="3"/>
</dbReference>
<dbReference type="PRINTS" id="PR01966">
    <property type="entry name" value="TNFACTORR16"/>
</dbReference>
<dbReference type="SMART" id="SM00005">
    <property type="entry name" value="DEATH"/>
    <property type="match status" value="1"/>
</dbReference>
<dbReference type="SMART" id="SM00208">
    <property type="entry name" value="TNFR"/>
    <property type="match status" value="4"/>
</dbReference>
<dbReference type="SUPFAM" id="SSF47986">
    <property type="entry name" value="DEATH domain"/>
    <property type="match status" value="1"/>
</dbReference>
<dbReference type="SUPFAM" id="SSF57586">
    <property type="entry name" value="TNF receptor-like"/>
    <property type="match status" value="4"/>
</dbReference>
<dbReference type="PROSITE" id="PS50017">
    <property type="entry name" value="DEATH_DOMAIN"/>
    <property type="match status" value="1"/>
</dbReference>
<dbReference type="PROSITE" id="PS00652">
    <property type="entry name" value="TNFR_NGFR_1"/>
    <property type="match status" value="3"/>
</dbReference>
<dbReference type="PROSITE" id="PS50050">
    <property type="entry name" value="TNFR_NGFR_2"/>
    <property type="match status" value="4"/>
</dbReference>
<feature type="signal peptide">
    <location>
        <begin position="1"/>
        <end position="28"/>
    </location>
</feature>
<feature type="chain" id="PRO_0000034591" description="Tumor necrosis factor receptor superfamily member 16">
    <location>
        <begin position="29"/>
        <end position="427"/>
    </location>
</feature>
<feature type="topological domain" description="Extracellular" evidence="4">
    <location>
        <begin position="29"/>
        <end position="250"/>
    </location>
</feature>
<feature type="transmembrane region" description="Helical" evidence="4">
    <location>
        <begin position="251"/>
        <end position="272"/>
    </location>
</feature>
<feature type="topological domain" description="Cytoplasmic" evidence="4">
    <location>
        <begin position="273"/>
        <end position="427"/>
    </location>
</feature>
<feature type="repeat" description="TNFR-Cys 1">
    <location>
        <begin position="31"/>
        <end position="64"/>
    </location>
</feature>
<feature type="repeat" description="TNFR-Cys 2">
    <location>
        <begin position="66"/>
        <end position="107"/>
    </location>
</feature>
<feature type="repeat" description="TNFR-Cys 3">
    <location>
        <begin position="108"/>
        <end position="146"/>
    </location>
</feature>
<feature type="repeat" description="TNFR-Cys 4">
    <location>
        <begin position="148"/>
        <end position="188"/>
    </location>
</feature>
<feature type="domain" description="Death" evidence="5">
    <location>
        <begin position="344"/>
        <end position="421"/>
    </location>
</feature>
<feature type="region of interest" description="Disordered" evidence="7">
    <location>
        <begin position="194"/>
        <end position="219"/>
    </location>
</feature>
<feature type="region of interest" description="Disordered" evidence="7">
    <location>
        <begin position="281"/>
        <end position="338"/>
    </location>
</feature>
<feature type="region of interest" description="Mediates interaction with KIDINS220" evidence="1">
    <location>
        <begin position="326"/>
        <end position="341"/>
    </location>
</feature>
<feature type="compositionally biased region" description="Polar residues" evidence="7">
    <location>
        <begin position="197"/>
        <end position="214"/>
    </location>
</feature>
<feature type="compositionally biased region" description="Polar residues" evidence="7">
    <location>
        <begin position="281"/>
        <end position="291"/>
    </location>
</feature>
<feature type="compositionally biased region" description="Polar residues" evidence="7">
    <location>
        <begin position="305"/>
        <end position="326"/>
    </location>
</feature>
<feature type="modified residue" description="Phosphoserine" evidence="27">
    <location>
        <position position="311"/>
    </location>
</feature>
<feature type="glycosylation site" id="CAR_000231" description="N-linked (GlcNAc...) asparagine" evidence="23">
    <location>
        <position position="60"/>
    </location>
</feature>
<feature type="disulfide bond" evidence="6">
    <location>
        <begin position="32"/>
        <end position="43"/>
    </location>
</feature>
<feature type="disulfide bond" evidence="6">
    <location>
        <begin position="44"/>
        <end position="57"/>
    </location>
</feature>
<feature type="disulfide bond" evidence="6">
    <location>
        <begin position="47"/>
        <end position="64"/>
    </location>
</feature>
<feature type="disulfide bond" evidence="6">
    <location>
        <begin position="67"/>
        <end position="83"/>
    </location>
</feature>
<feature type="disulfide bond" evidence="6">
    <location>
        <begin position="86"/>
        <end position="99"/>
    </location>
</feature>
<feature type="disulfide bond" evidence="6">
    <location>
        <begin position="89"/>
        <end position="107"/>
    </location>
</feature>
<feature type="disulfide bond" evidence="6">
    <location>
        <begin position="109"/>
        <end position="122"/>
    </location>
</feature>
<feature type="disulfide bond" evidence="6">
    <location>
        <begin position="125"/>
        <end position="138"/>
    </location>
</feature>
<feature type="disulfide bond" evidence="6">
    <location>
        <begin position="128"/>
        <end position="146"/>
    </location>
</feature>
<feature type="disulfide bond" evidence="6">
    <location>
        <begin position="149"/>
        <end position="164"/>
    </location>
</feature>
<feature type="disulfide bond" evidence="6">
    <location>
        <begin position="167"/>
        <end position="180"/>
    </location>
</feature>
<feature type="disulfide bond" evidence="6">
    <location>
        <begin position="170"/>
        <end position="188"/>
    </location>
</feature>
<feature type="splice variant" id="VSP_056850" description="In isoform 2." evidence="21">
    <location>
        <begin position="1"/>
        <end position="94"/>
    </location>
</feature>
<feature type="sequence variant" id="VAR_020010" description="In dbSNP:rs2072446.">
    <original>S</original>
    <variation>L</variation>
    <location>
        <position position="205"/>
    </location>
</feature>
<feature type="mutagenesis site" description="Decreased interaction with ARHGDIA." evidence="18">
    <original>K</original>
    <variation>A</variation>
    <location>
        <position position="343"/>
    </location>
</feature>
<feature type="mutagenesis site" description="Decreased interaction with ARHGDIA." evidence="18">
    <original>D</original>
    <variation>A</variation>
    <location>
        <position position="412"/>
    </location>
</feature>
<feature type="mutagenesis site" description="Decreased interaction with ARHGDIA." evidence="18">
    <original>E</original>
    <variation>A</variation>
    <location>
        <position position="420"/>
    </location>
</feature>
<feature type="turn" evidence="30">
    <location>
        <begin position="246"/>
        <end position="248"/>
    </location>
</feature>
<feature type="helix" evidence="30">
    <location>
        <begin position="252"/>
        <end position="276"/>
    </location>
</feature>
<feature type="strand" evidence="32">
    <location>
        <begin position="289"/>
        <end position="291"/>
    </location>
</feature>
<feature type="strand" evidence="32">
    <location>
        <begin position="296"/>
        <end position="298"/>
    </location>
</feature>
<feature type="turn" evidence="32">
    <location>
        <begin position="301"/>
        <end position="303"/>
    </location>
</feature>
<feature type="turn" evidence="32">
    <location>
        <begin position="305"/>
        <end position="311"/>
    </location>
</feature>
<feature type="strand" evidence="32">
    <location>
        <begin position="314"/>
        <end position="317"/>
    </location>
</feature>
<feature type="helix" evidence="28">
    <location>
        <begin position="336"/>
        <end position="338"/>
    </location>
</feature>
<feature type="helix" evidence="28">
    <location>
        <begin position="341"/>
        <end position="351"/>
    </location>
</feature>
<feature type="strand" evidence="31">
    <location>
        <begin position="354"/>
        <end position="356"/>
    </location>
</feature>
<feature type="helix" evidence="28">
    <location>
        <begin position="358"/>
        <end position="366"/>
    </location>
</feature>
<feature type="helix" evidence="28">
    <location>
        <begin position="370"/>
        <end position="377"/>
    </location>
</feature>
<feature type="strand" evidence="28">
    <location>
        <begin position="379"/>
        <end position="381"/>
    </location>
</feature>
<feature type="helix" evidence="28">
    <location>
        <begin position="382"/>
        <end position="390"/>
    </location>
</feature>
<feature type="helix" evidence="29">
    <location>
        <begin position="398"/>
        <end position="409"/>
    </location>
</feature>
<feature type="helix" evidence="28">
    <location>
        <begin position="411"/>
        <end position="417"/>
    </location>
</feature>
<feature type="turn" evidence="28">
    <location>
        <begin position="418"/>
        <end position="420"/>
    </location>
</feature>
<feature type="strand" evidence="28">
    <location>
        <begin position="421"/>
        <end position="423"/>
    </location>
</feature>
<sequence>MGAGATGRAMDGPRLLLLLLLGVSLGGAKEACPTGLYTHSGECCKACNLGEGVAQPCGANQTVCEPCLDSVTFSDVVSATEPCKPCTECVGLQSMSAPCVEADDAVCRCAYGYYQDETTGRCEACRVCEAGSGLVFSCQDKQNTVCEECPDGTYSDEANHVDPCLPCTVCEDTERQLRECTRWADAECEEIPGRWITRSTPPEGSDSTAPSTQEPEAPPEQDLIASTVAGVVTTVMGSSQPVVTRGTTDNLIPVYCSILAAVVVGLVAYIAFKRWNSCKQNKQGANSRPVNQTPPPEGEKLHSDSGISVDSQSLHDQQPHTQTASGQALKGDGGLYSSLPPAKREEVEKLLNGSAGDTWRHLAGELGYQPEHIDSFTHEACPVRALLASWATQDSATLDALLAALRRIQRADLVESLCSESTATSPV</sequence>
<keyword id="KW-0002">3D-structure</keyword>
<keyword id="KW-0025">Alternative splicing</keyword>
<keyword id="KW-0053">Apoptosis</keyword>
<keyword id="KW-0090">Biological rhythms</keyword>
<keyword id="KW-1003">Cell membrane</keyword>
<keyword id="KW-0966">Cell projection</keyword>
<keyword id="KW-0963">Cytoplasm</keyword>
<keyword id="KW-0217">Developmental protein</keyword>
<keyword id="KW-0221">Differentiation</keyword>
<keyword id="KW-1015">Disulfide bond</keyword>
<keyword id="KW-0325">Glycoprotein</keyword>
<keyword id="KW-0472">Membrane</keyword>
<keyword id="KW-0524">Neurogenesis</keyword>
<keyword id="KW-0597">Phosphoprotein</keyword>
<keyword id="KW-1267">Proteomics identification</keyword>
<keyword id="KW-0675">Receptor</keyword>
<keyword id="KW-1185">Reference proteome</keyword>
<keyword id="KW-0677">Repeat</keyword>
<keyword id="KW-0732">Signal</keyword>
<keyword id="KW-0770">Synapse</keyword>
<keyword id="KW-0812">Transmembrane</keyword>
<keyword id="KW-1133">Transmembrane helix</keyword>
<proteinExistence type="evidence at protein level"/>
<protein>
    <recommendedName>
        <fullName>Tumor necrosis factor receptor superfamily member 16</fullName>
    </recommendedName>
    <alternativeName>
        <fullName>Gp80-LNGFR</fullName>
    </alternativeName>
    <alternativeName>
        <fullName>Low affinity neurotrophin receptor p75NTR</fullName>
    </alternativeName>
    <alternativeName>
        <fullName>Low-affinity nerve growth factor receptor</fullName>
        <shortName evidence="22">NGF receptor</shortName>
    </alternativeName>
    <alternativeName>
        <fullName>Low-affinity nerve growth factor receptor p75NGFR</fullName>
    </alternativeName>
    <alternativeName>
        <fullName>Low-affinity nerve growth factor receptor p75NGR</fullName>
    </alternativeName>
    <alternativeName>
        <fullName>p75 ICD</fullName>
    </alternativeName>
    <cdAntigenName>CD271</cdAntigenName>
</protein>
<name>TNR16_HUMAN</name>
<accession>P08138</accession>
<accession>B2R961</accession>
<accession>B4E096</accession>
<organism>
    <name type="scientific">Homo sapiens</name>
    <name type="common">Human</name>
    <dbReference type="NCBI Taxonomy" id="9606"/>
    <lineage>
        <taxon>Eukaryota</taxon>
        <taxon>Metazoa</taxon>
        <taxon>Chordata</taxon>
        <taxon>Craniata</taxon>
        <taxon>Vertebrata</taxon>
        <taxon>Euteleostomi</taxon>
        <taxon>Mammalia</taxon>
        <taxon>Eutheria</taxon>
        <taxon>Euarchontoglires</taxon>
        <taxon>Primates</taxon>
        <taxon>Haplorrhini</taxon>
        <taxon>Catarrhini</taxon>
        <taxon>Hominidae</taxon>
        <taxon>Homo</taxon>
    </lineage>
</organism>
<evidence type="ECO:0000250" key="1"/>
<evidence type="ECO:0000250" key="2">
    <source>
        <dbReference type="UniProtKB" id="P07174"/>
    </source>
</evidence>
<evidence type="ECO:0000250" key="3">
    <source>
        <dbReference type="UniProtKB" id="Q9Z0W1"/>
    </source>
</evidence>
<evidence type="ECO:0000255" key="4"/>
<evidence type="ECO:0000255" key="5">
    <source>
        <dbReference type="PROSITE-ProRule" id="PRU00064"/>
    </source>
</evidence>
<evidence type="ECO:0000255" key="6">
    <source>
        <dbReference type="PROSITE-ProRule" id="PRU00206"/>
    </source>
</evidence>
<evidence type="ECO:0000256" key="7">
    <source>
        <dbReference type="SAM" id="MobiDB-lite"/>
    </source>
</evidence>
<evidence type="ECO:0000269" key="8">
    <source>
    </source>
</evidence>
<evidence type="ECO:0000269" key="9">
    <source>
    </source>
</evidence>
<evidence type="ECO:0000269" key="10">
    <source>
    </source>
</evidence>
<evidence type="ECO:0000269" key="11">
    <source>
    </source>
</evidence>
<evidence type="ECO:0000269" key="12">
    <source>
    </source>
</evidence>
<evidence type="ECO:0000269" key="13">
    <source>
    </source>
</evidence>
<evidence type="ECO:0000269" key="14">
    <source>
    </source>
</evidence>
<evidence type="ECO:0000269" key="15">
    <source>
    </source>
</evidence>
<evidence type="ECO:0000269" key="16">
    <source>
    </source>
</evidence>
<evidence type="ECO:0000269" key="17">
    <source>
    </source>
</evidence>
<evidence type="ECO:0000269" key="18">
    <source>
    </source>
</evidence>
<evidence type="ECO:0000269" key="19">
    <source>
    </source>
</evidence>
<evidence type="ECO:0000269" key="20">
    <source>
    </source>
</evidence>
<evidence type="ECO:0000303" key="21">
    <source>
    </source>
</evidence>
<evidence type="ECO:0000303" key="22">
    <source>
    </source>
</evidence>
<evidence type="ECO:0000305" key="23"/>
<evidence type="ECO:0007744" key="24">
    <source>
        <dbReference type="PDB" id="2N80"/>
    </source>
</evidence>
<evidence type="ECO:0007744" key="25">
    <source>
        <dbReference type="PDB" id="2N83"/>
    </source>
</evidence>
<evidence type="ECO:0007744" key="26">
    <source>
        <dbReference type="PDB" id="2N97"/>
    </source>
</evidence>
<evidence type="ECO:0007744" key="27">
    <source>
    </source>
</evidence>
<evidence type="ECO:0007829" key="28">
    <source>
        <dbReference type="PDB" id="2N80"/>
    </source>
</evidence>
<evidence type="ECO:0007829" key="29">
    <source>
        <dbReference type="PDB" id="3EWV"/>
    </source>
</evidence>
<evidence type="ECO:0007829" key="30">
    <source>
        <dbReference type="PDB" id="5ZGG"/>
    </source>
</evidence>
<evidence type="ECO:0007829" key="31">
    <source>
        <dbReference type="PDB" id="7CSQ"/>
    </source>
</evidence>
<evidence type="ECO:0007829" key="32">
    <source>
        <dbReference type="PDB" id="8X8T"/>
    </source>
</evidence>
<reference key="1">
    <citation type="journal article" date="1986" name="Cell">
        <title>Expression and structure of the human NGF receptor.</title>
        <authorList>
            <person name="Johnson D."/>
            <person name="Lanahan A."/>
            <person name="Buck C.R."/>
            <person name="Sehgal A."/>
            <person name="Morgan C."/>
            <person name="Mercer E."/>
            <person name="Bothwell M."/>
            <person name="Chao M."/>
        </authorList>
    </citation>
    <scope>NUCLEOTIDE SEQUENCE [MRNA] (ISOFORM 1)</scope>
    <scope>FUNCTION</scope>
    <scope>SUBCELLULAR LOCATION</scope>
</reference>
<reference key="2">
    <citation type="journal article" date="2004" name="Nat. Genet.">
        <title>Complete sequencing and characterization of 21,243 full-length human cDNAs.</title>
        <authorList>
            <person name="Ota T."/>
            <person name="Suzuki Y."/>
            <person name="Nishikawa T."/>
            <person name="Otsuki T."/>
            <person name="Sugiyama T."/>
            <person name="Irie R."/>
            <person name="Wakamatsu A."/>
            <person name="Hayashi K."/>
            <person name="Sato H."/>
            <person name="Nagai K."/>
            <person name="Kimura K."/>
            <person name="Makita H."/>
            <person name="Sekine M."/>
            <person name="Obayashi M."/>
            <person name="Nishi T."/>
            <person name="Shibahara T."/>
            <person name="Tanaka T."/>
            <person name="Ishii S."/>
            <person name="Yamamoto J."/>
            <person name="Saito K."/>
            <person name="Kawai Y."/>
            <person name="Isono Y."/>
            <person name="Nakamura Y."/>
            <person name="Nagahari K."/>
            <person name="Murakami K."/>
            <person name="Yasuda T."/>
            <person name="Iwayanagi T."/>
            <person name="Wagatsuma M."/>
            <person name="Shiratori A."/>
            <person name="Sudo H."/>
            <person name="Hosoiri T."/>
            <person name="Kaku Y."/>
            <person name="Kodaira H."/>
            <person name="Kondo H."/>
            <person name="Sugawara M."/>
            <person name="Takahashi M."/>
            <person name="Kanda K."/>
            <person name="Yokoi T."/>
            <person name="Furuya T."/>
            <person name="Kikkawa E."/>
            <person name="Omura Y."/>
            <person name="Abe K."/>
            <person name="Kamihara K."/>
            <person name="Katsuta N."/>
            <person name="Sato K."/>
            <person name="Tanikawa M."/>
            <person name="Yamazaki M."/>
            <person name="Ninomiya K."/>
            <person name="Ishibashi T."/>
            <person name="Yamashita H."/>
            <person name="Murakawa K."/>
            <person name="Fujimori K."/>
            <person name="Tanai H."/>
            <person name="Kimata M."/>
            <person name="Watanabe M."/>
            <person name="Hiraoka S."/>
            <person name="Chiba Y."/>
            <person name="Ishida S."/>
            <person name="Ono Y."/>
            <person name="Takiguchi S."/>
            <person name="Watanabe S."/>
            <person name="Yosida M."/>
            <person name="Hotuta T."/>
            <person name="Kusano J."/>
            <person name="Kanehori K."/>
            <person name="Takahashi-Fujii A."/>
            <person name="Hara H."/>
            <person name="Tanase T.-O."/>
            <person name="Nomura Y."/>
            <person name="Togiya S."/>
            <person name="Komai F."/>
            <person name="Hara R."/>
            <person name="Takeuchi K."/>
            <person name="Arita M."/>
            <person name="Imose N."/>
            <person name="Musashino K."/>
            <person name="Yuuki H."/>
            <person name="Oshima A."/>
            <person name="Sasaki N."/>
            <person name="Aotsuka S."/>
            <person name="Yoshikawa Y."/>
            <person name="Matsunawa H."/>
            <person name="Ichihara T."/>
            <person name="Shiohata N."/>
            <person name="Sano S."/>
            <person name="Moriya S."/>
            <person name="Momiyama H."/>
            <person name="Satoh N."/>
            <person name="Takami S."/>
            <person name="Terashima Y."/>
            <person name="Suzuki O."/>
            <person name="Nakagawa S."/>
            <person name="Senoh A."/>
            <person name="Mizoguchi H."/>
            <person name="Goto Y."/>
            <person name="Shimizu F."/>
            <person name="Wakebe H."/>
            <person name="Hishigaki H."/>
            <person name="Watanabe T."/>
            <person name="Sugiyama A."/>
            <person name="Takemoto M."/>
            <person name="Kawakami B."/>
            <person name="Yamazaki M."/>
            <person name="Watanabe K."/>
            <person name="Kumagai A."/>
            <person name="Itakura S."/>
            <person name="Fukuzumi Y."/>
            <person name="Fujimori Y."/>
            <person name="Komiyama M."/>
            <person name="Tashiro H."/>
            <person name="Tanigami A."/>
            <person name="Fujiwara T."/>
            <person name="Ono T."/>
            <person name="Yamada K."/>
            <person name="Fujii Y."/>
            <person name="Ozaki K."/>
            <person name="Hirao M."/>
            <person name="Ohmori Y."/>
            <person name="Kawabata A."/>
            <person name="Hikiji T."/>
            <person name="Kobatake N."/>
            <person name="Inagaki H."/>
            <person name="Ikema Y."/>
            <person name="Okamoto S."/>
            <person name="Okitani R."/>
            <person name="Kawakami T."/>
            <person name="Noguchi S."/>
            <person name="Itoh T."/>
            <person name="Shigeta K."/>
            <person name="Senba T."/>
            <person name="Matsumura K."/>
            <person name="Nakajima Y."/>
            <person name="Mizuno T."/>
            <person name="Morinaga M."/>
            <person name="Sasaki M."/>
            <person name="Togashi T."/>
            <person name="Oyama M."/>
            <person name="Hata H."/>
            <person name="Watanabe M."/>
            <person name="Komatsu T."/>
            <person name="Mizushima-Sugano J."/>
            <person name="Satoh T."/>
            <person name="Shirai Y."/>
            <person name="Takahashi Y."/>
            <person name="Nakagawa K."/>
            <person name="Okumura K."/>
            <person name="Nagase T."/>
            <person name="Nomura N."/>
            <person name="Kikuchi H."/>
            <person name="Masuho Y."/>
            <person name="Yamashita R."/>
            <person name="Nakai K."/>
            <person name="Yada T."/>
            <person name="Nakamura Y."/>
            <person name="Ohara O."/>
            <person name="Isogai T."/>
            <person name="Sugano S."/>
        </authorList>
    </citation>
    <scope>NUCLEOTIDE SEQUENCE [LARGE SCALE MRNA] (ISOFORMS 1 AND 2)</scope>
    <source>
        <tissue>Cerebellum</tissue>
        <tissue>Thymus</tissue>
    </source>
</reference>
<reference key="3">
    <citation type="journal article" date="2006" name="Nature">
        <title>DNA sequence of human chromosome 17 and analysis of rearrangement in the human lineage.</title>
        <authorList>
            <person name="Zody M.C."/>
            <person name="Garber M."/>
            <person name="Adams D.J."/>
            <person name="Sharpe T."/>
            <person name="Harrow J."/>
            <person name="Lupski J.R."/>
            <person name="Nicholson C."/>
            <person name="Searle S.M."/>
            <person name="Wilming L."/>
            <person name="Young S.K."/>
            <person name="Abouelleil A."/>
            <person name="Allen N.R."/>
            <person name="Bi W."/>
            <person name="Bloom T."/>
            <person name="Borowsky M.L."/>
            <person name="Bugalter B.E."/>
            <person name="Butler J."/>
            <person name="Chang J.L."/>
            <person name="Chen C.-K."/>
            <person name="Cook A."/>
            <person name="Corum B."/>
            <person name="Cuomo C.A."/>
            <person name="de Jong P.J."/>
            <person name="DeCaprio D."/>
            <person name="Dewar K."/>
            <person name="FitzGerald M."/>
            <person name="Gilbert J."/>
            <person name="Gibson R."/>
            <person name="Gnerre S."/>
            <person name="Goldstein S."/>
            <person name="Grafham D.V."/>
            <person name="Grocock R."/>
            <person name="Hafez N."/>
            <person name="Hagopian D.S."/>
            <person name="Hart E."/>
            <person name="Norman C.H."/>
            <person name="Humphray S."/>
            <person name="Jaffe D.B."/>
            <person name="Jones M."/>
            <person name="Kamal M."/>
            <person name="Khodiyar V.K."/>
            <person name="LaButti K."/>
            <person name="Laird G."/>
            <person name="Lehoczky J."/>
            <person name="Liu X."/>
            <person name="Lokyitsang T."/>
            <person name="Loveland J."/>
            <person name="Lui A."/>
            <person name="Macdonald P."/>
            <person name="Major J.E."/>
            <person name="Matthews L."/>
            <person name="Mauceli E."/>
            <person name="McCarroll S.A."/>
            <person name="Mihalev A.H."/>
            <person name="Mudge J."/>
            <person name="Nguyen C."/>
            <person name="Nicol R."/>
            <person name="O'Leary S.B."/>
            <person name="Osoegawa K."/>
            <person name="Schwartz D.C."/>
            <person name="Shaw-Smith C."/>
            <person name="Stankiewicz P."/>
            <person name="Steward C."/>
            <person name="Swarbreck D."/>
            <person name="Venkataraman V."/>
            <person name="Whittaker C.A."/>
            <person name="Yang X."/>
            <person name="Zimmer A.R."/>
            <person name="Bradley A."/>
            <person name="Hubbard T."/>
            <person name="Birren B.W."/>
            <person name="Rogers J."/>
            <person name="Lander E.S."/>
            <person name="Nusbaum C."/>
        </authorList>
    </citation>
    <scope>NUCLEOTIDE SEQUENCE [LARGE SCALE GENOMIC DNA]</scope>
</reference>
<reference key="4">
    <citation type="submission" date="2005-09" db="EMBL/GenBank/DDBJ databases">
        <authorList>
            <person name="Mural R.J."/>
            <person name="Istrail S."/>
            <person name="Sutton G.G."/>
            <person name="Florea L."/>
            <person name="Halpern A.L."/>
            <person name="Mobarry C.M."/>
            <person name="Lippert R."/>
            <person name="Walenz B."/>
            <person name="Shatkay H."/>
            <person name="Dew I."/>
            <person name="Miller J.R."/>
            <person name="Flanigan M.J."/>
            <person name="Edwards N.J."/>
            <person name="Bolanos R."/>
            <person name="Fasulo D."/>
            <person name="Halldorsson B.V."/>
            <person name="Hannenhalli S."/>
            <person name="Turner R."/>
            <person name="Yooseph S."/>
            <person name="Lu F."/>
            <person name="Nusskern D.R."/>
            <person name="Shue B.C."/>
            <person name="Zheng X.H."/>
            <person name="Zhong F."/>
            <person name="Delcher A.L."/>
            <person name="Huson D.H."/>
            <person name="Kravitz S.A."/>
            <person name="Mouchard L."/>
            <person name="Reinert K."/>
            <person name="Remington K.A."/>
            <person name="Clark A.G."/>
            <person name="Waterman M.S."/>
            <person name="Eichler E.E."/>
            <person name="Adams M.D."/>
            <person name="Hunkapiller M.W."/>
            <person name="Myers E.W."/>
            <person name="Venter J.C."/>
        </authorList>
    </citation>
    <scope>NUCLEOTIDE SEQUENCE [LARGE SCALE GENOMIC DNA]</scope>
</reference>
<reference key="5">
    <citation type="journal article" date="2004" name="Genome Res.">
        <title>The status, quality, and expansion of the NIH full-length cDNA project: the Mammalian Gene Collection (MGC).</title>
        <authorList>
            <consortium name="The MGC Project Team"/>
        </authorList>
    </citation>
    <scope>NUCLEOTIDE SEQUENCE [LARGE SCALE MRNA] (ISOFORM 1)</scope>
    <source>
        <tissue>Brain</tissue>
    </source>
</reference>
<reference key="6">
    <citation type="journal article" date="1988" name="Mol. Cell. Biol.">
        <title>A constitutive promoter directs expression of the nerve growth factor receptor gene.</title>
        <authorList>
            <person name="Sehgal A."/>
            <person name="Patil N."/>
            <person name="Chao M."/>
        </authorList>
    </citation>
    <scope>NUCLEOTIDE SEQUENCE [GENOMIC DNA] OF 1-22</scope>
</reference>
<reference key="7">
    <citation type="journal article" date="1999" name="J. Biol. Chem.">
        <title>TRAF family proteins interact with the common neurotrophin receptor and modulate apoptosis induction.</title>
        <authorList>
            <person name="Ye X."/>
            <person name="Mehlen P."/>
            <person name="Rabizadeh S."/>
            <person name="VanArsdale T."/>
            <person name="Zhang H."/>
            <person name="Shin H."/>
            <person name="Wang J.J.L."/>
            <person name="Leo E."/>
            <person name="Zapata J.M."/>
            <person name="Hauser C.A."/>
            <person name="Reed J.C."/>
            <person name="Bredesen D.E."/>
        </authorList>
    </citation>
    <scope>INTERACTION WITH TRAF2; TRAF4 AND TRAF6</scope>
</reference>
<reference key="8">
    <citation type="journal article" date="1999" name="J. Biol. Chem.">
        <title>Association of the p75 neurotrophin receptor with TRAF6.</title>
        <authorList>
            <person name="Khursigara G."/>
            <person name="Orlinick J.R."/>
            <person name="Chao M.V."/>
        </authorList>
    </citation>
    <scope>INTERACTION WITH TRAF6</scope>
</reference>
<reference key="9">
    <citation type="journal article" date="1999" name="FEBS Lett.">
        <title>Functional interaction of Fas-associated phosphatase-1 (FAP-1) with p75(NTR) and their effect on NF-kappaB activation.</title>
        <authorList>
            <person name="Irie S."/>
            <person name="Hachiya T."/>
            <person name="Rabizadeh S."/>
            <person name="Maruyama W."/>
            <person name="Mukai J."/>
            <person name="Li Y."/>
            <person name="Reed J.C."/>
            <person name="Bredesen D.E."/>
            <person name="Sato T.A."/>
        </authorList>
    </citation>
    <scope>INTERACTION WITH PTPN13</scope>
</reference>
<reference key="10">
    <citation type="journal article" date="2001" name="J. Biol. Chem.">
        <title>The atypical protein kinase C-interacting protein p62 is a scaffold for NF-kappaB activation by nerve growth factor.</title>
        <authorList>
            <person name="Wooten M.W."/>
            <person name="Seibenhener M.L."/>
            <person name="Mamidipudi V."/>
            <person name="Diaz-Meco M.T."/>
            <person name="Barker P.A."/>
            <person name="Moscat J."/>
        </authorList>
    </citation>
    <scope>INTERACTION WITH TRAF6 AND SQSTM1</scope>
</reference>
<reference key="11">
    <citation type="journal article" date="2003" name="Biochem. Biophys. Res. Commun.">
        <title>RanBPM is a novel binding protein for p75NTR.</title>
        <authorList>
            <person name="Bai D."/>
            <person name="Chen H."/>
            <person name="Huang B.-R."/>
        </authorList>
    </citation>
    <scope>INTERACTION WITH RANBP9</scope>
    <source>
        <tissue>Brain</tissue>
    </source>
</reference>
<reference key="12">
    <citation type="journal article" date="2004" name="Nat. Neurosci.">
        <title>LINGO-1 is a component of the Nogo-66 receptor/p75 signaling complex.</title>
        <authorList>
            <person name="Mi S."/>
            <person name="Lee X."/>
            <person name="Shao Z."/>
            <person name="Thill G."/>
            <person name="Ji B."/>
            <person name="Relton J."/>
            <person name="Levesque M."/>
            <person name="Allaire N."/>
            <person name="Perrin S."/>
            <person name="Sands B."/>
            <person name="Crowell T."/>
            <person name="Cate R.L."/>
            <person name="McCoy J.M."/>
            <person name="Pepinsky R.B."/>
        </authorList>
    </citation>
    <scope>FUNCTION</scope>
    <scope>INTERACTION WITH LINGO1</scope>
</reference>
<reference key="13">
    <citation type="journal article" date="1996" name="J. Neurochem.">
        <title>O-linked oligosaccharide on the 75-kDa neurotrophin receptor.</title>
        <authorList>
            <person name="Chapman B.S."/>
            <person name="Eckart M.R."/>
            <person name="Kaufman S.E."/>
            <person name="Lapointe G.R."/>
        </authorList>
    </citation>
    <scope>STRUCTURE OF O-LINKED CARBOHYDRATE</scope>
</reference>
<reference key="14">
    <citation type="journal article" date="2008" name="J. Neurosci.">
        <title>Genetic variants of Nogo-66 receptor with possible association to schizophrenia block myelin inhibition of axon growth.</title>
        <authorList>
            <person name="Budel S."/>
            <person name="Padukkavidana T."/>
            <person name="Liu B.P."/>
            <person name="Feng Z."/>
            <person name="Hu F."/>
            <person name="Johnson S."/>
            <person name="Lauren J."/>
            <person name="Park J.H."/>
            <person name="McGee A.W."/>
            <person name="Liao J."/>
            <person name="Stillman A."/>
            <person name="Kim J.E."/>
            <person name="Yang B.Z."/>
            <person name="Sodi S."/>
            <person name="Gelernter J."/>
            <person name="Zhao H."/>
            <person name="Hisama F."/>
            <person name="Arnsten A.F."/>
            <person name="Strittmatter S.M."/>
        </authorList>
    </citation>
    <scope>INTERACTION WITH RTN4R</scope>
</reference>
<reference key="15">
    <citation type="journal article" date="2011" name="Sci. Signal.">
        <title>Neuronal growth cone retraction relies on proneurotrophin receptor signaling through Rac.</title>
        <authorList>
            <person name="Deinhardt K."/>
            <person name="Kim T."/>
            <person name="Spellman D.S."/>
            <person name="Mains R.E."/>
            <person name="Eipper B.A."/>
            <person name="Neubert T.A."/>
            <person name="Chao M.V."/>
            <person name="Hempstead B.L."/>
        </authorList>
    </citation>
    <scope>INTERACTION WITH SORCS2 AND TRIO</scope>
</reference>
<reference key="16">
    <citation type="journal article" date="2012" name="Sci. China Life Sci.">
        <title>p75NTR signal transduction suppressed by BFAR and p75NTR interactions.</title>
        <authorList>
            <person name="Li H."/>
            <person name="Shi H."/>
            <person name="Huo K."/>
        </authorList>
    </citation>
    <scope>FUNCTION</scope>
    <scope>SUBCELLULAR LOCATION</scope>
    <scope>INTERACTION WITH BFAR</scope>
</reference>
<reference key="17">
    <citation type="journal article" date="2013" name="J. Neurosci.">
        <title>p75 neurotrophin receptor is a clock gene that regulates oscillatory components of circadian and metabolic networks.</title>
        <authorList>
            <person name="Baeza-Raja B."/>
            <person name="Eckel-Mahan K."/>
            <person name="Zhang L."/>
            <person name="Vagena E."/>
            <person name="Tsigelny I.F."/>
            <person name="Sassone-Corsi P."/>
            <person name="Ptacek L.J."/>
            <person name="Akassoglou K."/>
        </authorList>
    </citation>
    <scope>FUNCTION</scope>
</reference>
<reference key="18">
    <citation type="journal article" date="2014" name="J. Proteomics">
        <title>An enzyme assisted RP-RPLC approach for in-depth analysis of human liver phosphoproteome.</title>
        <authorList>
            <person name="Bian Y."/>
            <person name="Song C."/>
            <person name="Cheng K."/>
            <person name="Dong M."/>
            <person name="Wang F."/>
            <person name="Huang J."/>
            <person name="Sun D."/>
            <person name="Wang L."/>
            <person name="Ye M."/>
            <person name="Zou H."/>
        </authorList>
    </citation>
    <scope>PHOSPHORYLATION [LARGE SCALE ANALYSIS] AT SER-311</scope>
    <scope>IDENTIFICATION BY MASS SPECTROMETRY [LARGE SCALE ANALYSIS]</scope>
    <source>
        <tissue>Liver</tissue>
    </source>
</reference>
<reference key="19">
    <citation type="journal article" date="2014" name="Neuron">
        <title>SorCS2 regulates dopaminergic wiring and is processed into an apoptotic two-chain receptor in peripheral glia.</title>
        <authorList>
            <person name="Glerup S."/>
            <person name="Olsen D."/>
            <person name="Vaegter C.B."/>
            <person name="Gustafsen C."/>
            <person name="Sjoegaard S.S."/>
            <person name="Hermey G."/>
            <person name="Kjolby M."/>
            <person name="Molgaard S."/>
            <person name="Ulrichsen M."/>
            <person name="Boggild S."/>
            <person name="Skeldal S."/>
            <person name="Fjorback A.N."/>
            <person name="Nyengaard J.R."/>
            <person name="Jacobsen J."/>
            <person name="Bender D."/>
            <person name="Bjarkam C.R."/>
            <person name="Soerensen E.S."/>
            <person name="Fuechtbauer E.M."/>
            <person name="Eichele G."/>
            <person name="Madsen P."/>
            <person name="Willnow T.E."/>
            <person name="Petersen C.M."/>
            <person name="Nykjaer A."/>
        </authorList>
    </citation>
    <scope>INTERACTION WITH SORCS2</scope>
    <scope>FUNCTION</scope>
</reference>
<reference evidence="24 25 26" key="20">
    <citation type="journal article" date="2015" name="Elife">
        <title>Structural basis of death domain signaling in the p75 neurotrophin receptor.</title>
        <authorList>
            <person name="Lin Z."/>
            <person name="Tann J.Y."/>
            <person name="Goh E.T."/>
            <person name="Kelly C."/>
            <person name="Lim K.B."/>
            <person name="Gao J.F."/>
            <person name="Ibanez C.F."/>
        </authorList>
    </citation>
    <scope>STRUCTURE BY NMR OF 330-427 IN COMPLEXES WITH RIPK2 AND ARHGDIA</scope>
    <scope>FUNCTION</scope>
    <scope>SUBUNIT</scope>
    <scope>DOMAIN</scope>
    <scope>MUTAGENESIS OF LYS-343; ASP-412 AND GLU-420</scope>
</reference>
<comment type="function">
    <text evidence="1 3 12 16 17 18 19">Low affinity receptor which can bind to NGF, BDNF, NTF3, and NTF4. Forms a heterodimeric receptor with SORCS2 that binds the precursor forms of NGF, BDNF and NTF3 with high affinity, and has much lower affinity for mature NGF and BDNF (PubMed:24908487). Plays an important role in differentiation and survival of specific neuronal populations during development (By similarity). Can mediate cell survival as well as cell death of neural cells. Plays a role in the inactivation of RHOA (PubMed:26646181). Plays a role in the regulation of the translocation of GLUT4 to the cell surface in adipocytes and skeletal muscle cells in response to insulin, probably by regulating RAB31 activity, and thereby contributes to the regulation of insulin-dependent glucose uptake (By similarity). Necessary for the circadian oscillation of the clock genes BMAL1, PER1, PER2 and NR1D1 in the suprachiasmatic nucleus (SCmgetaN) of the brain and in liver and of the genes involved in glucose and lipid metabolism in the liver (PubMed:23785138). Together with BFAR negatively regulates NF-kappa-B and JNK-related signaling pathways (PubMed:22566094).</text>
</comment>
<comment type="subunit">
    <text evidence="2 3 8 9 10 11 12 13 14 15 17 18 20">Homodimer; disulfide-linked (By similarity). Heterodimer with SORCS2. The extracellular domains of the heterodimer bind NGF (PubMed:22155786, PubMed:24908487). The cytoplasmic region of the heterodimer binds TRIO. NGF binding mediates dissociation of TRIO from the receptor complex (PubMed:22155786). Interacts with RTN4R (PubMed:19052207). Interacts with TRAF2, TRAF4, TRAF6, PTPN13 and RANBP9 (PubMed:10514511, PubMed:10544233, PubMed:12963025, PubMed:9915784). Interacts through TRAF6 with SQSTM1 which bridges NGFR to NTRK1 (PubMed:11244088). Interacts with BEX1 (By similarity). Interacts with BEX3 (By similarity). Interacts with KIDINS220 and NTRK1. Can form a ternary complex with NTRK1 and KIDINS220 and this complex is affected by the expression levels of KIDINS220. An increase in KIDINS220 expression leads to a decreased association of NGFR and NTRK1. Interacts with NTRK2; may regulate the ligand specificity of the NTRK2 receptor (By similarity). Interacts (via death domain) with RAB31 (By similarity). Interacts with LINGO1 (PubMed:14966521). Interacts with NRADD (By similarity). Interacts with MAGED1; the interaction antagonizes the association NGFR:NTRK1 (By similarity). Interacts (via death domain) with ARHGDIA and RIPK2 (PubMed:26646181). Interacts with BFAR (PubMed:22566094).</text>
</comment>
<comment type="interaction">
    <interactant intactId="EBI-1387782">
        <id>P08138</id>
    </interactant>
    <interactant intactId="EBI-77613">
        <id>P05067</id>
        <label>APP</label>
    </interactant>
    <organismsDiffer>false</organismsDiffer>
    <experiments>2</experiments>
</comment>
<comment type="interaction">
    <interactant intactId="EBI-1387782">
        <id>P08138</id>
    </interactant>
    <interactant intactId="EBI-2431589">
        <id>PRO_0000000093</id>
        <label>APP</label>
        <dbReference type="UniProtKB" id="P05067"/>
    </interactant>
    <organismsDiffer>false</organismsDiffer>
    <experiments>2</experiments>
</comment>
<comment type="interaction">
    <interactant intactId="EBI-1387782">
        <id>P08138</id>
    </interactant>
    <interactant intactId="EBI-1031024">
        <id>P33681</id>
        <label>CD80</label>
    </interactant>
    <organismsDiffer>false</organismsDiffer>
    <experiments>3</experiments>
</comment>
<comment type="interaction">
    <interactant intactId="EBI-1387782">
        <id>P08138</id>
    </interactant>
    <interactant intactId="EBI-719955">
        <id>Q96FE5</id>
        <label>LINGO1</label>
    </interactant>
    <organismsDiffer>false</organismsDiffer>
    <experiments>2</experiments>
</comment>
<comment type="interaction">
    <interactant intactId="EBI-1387782">
        <id>P08138</id>
    </interactant>
    <interactant intactId="EBI-1028250">
        <id>P01138</id>
        <label>NGF</label>
    </interactant>
    <organismsDiffer>false</organismsDiffer>
    <experiments>2</experiments>
</comment>
<comment type="interaction">
    <interactant intactId="EBI-1387782">
        <id>P08138</id>
    </interactant>
    <interactant intactId="EBI-9249861">
        <id>PRO_0000019600</id>
        <label>NGF</label>
        <dbReference type="UniProtKB" id="P01138"/>
    </interactant>
    <organismsDiffer>false</organismsDiffer>
    <experiments>2</experiments>
</comment>
<comment type="interaction">
    <interactant intactId="EBI-1387782">
        <id>P08138</id>
    </interactant>
    <interactant intactId="EBI-746180">
        <id>Q9Y467</id>
        <label>SALL2</label>
    </interactant>
    <organismsDiffer>false</organismsDiffer>
    <experiments>3</experiments>
</comment>
<comment type="interaction">
    <interactant intactId="EBI-1387782">
        <id>P08138</id>
    </interactant>
    <interactant intactId="EBI-5235340">
        <id>Q7Z699</id>
        <label>SPRED1</label>
    </interactant>
    <organismsDiffer>false</organismsDiffer>
    <experiments>3</experiments>
</comment>
<comment type="interaction">
    <interactant intactId="EBI-1387782">
        <id>P08138</id>
    </interactant>
    <interactant intactId="EBI-357085">
        <id>Q9UNE7</id>
        <label>STUB1</label>
    </interactant>
    <organismsDiffer>false</organismsDiffer>
    <experiments>3</experiments>
</comment>
<comment type="interaction">
    <interactant intactId="EBI-1387782">
        <id>P08138</id>
    </interactant>
    <interactant intactId="EBI-2313231">
        <id>O75509</id>
        <label>TNFRSF21</label>
    </interactant>
    <organismsDiffer>false</organismsDiffer>
    <experiments>4</experiments>
</comment>
<comment type="interaction">
    <interactant intactId="EBI-1387782">
        <id>P08138</id>
    </interactant>
    <interactant intactId="EBI-1801080">
        <id>P25233</id>
        <label>Ndn</label>
    </interactant>
    <organismsDiffer>true</organismsDiffer>
    <experiments>3</experiments>
</comment>
<comment type="interaction">
    <interactant intactId="EBI-1387782">
        <id>P08138</id>
    </interactant>
    <interactant intactId="EBI-5529102">
        <id>Q9CPR8</id>
        <label>Nsmce3</label>
    </interactant>
    <organismsDiffer>true</organismsDiffer>
    <experiments>3</experiments>
</comment>
<comment type="subcellular location">
    <subcellularLocation>
        <location evidence="19">Cell membrane</location>
        <topology evidence="23">Single-pass type I membrane protein</topology>
    </subcellularLocation>
    <subcellularLocation>
        <location evidence="15">Cytoplasm</location>
    </subcellularLocation>
    <subcellularLocation>
        <location evidence="3">Perikaryon</location>
    </subcellularLocation>
    <subcellularLocation>
        <location evidence="3">Cell projection</location>
        <location evidence="3">Growth cone</location>
    </subcellularLocation>
    <subcellularLocation>
        <location evidence="3">Cell projection</location>
        <location evidence="3">Dendritic spine</location>
    </subcellularLocation>
</comment>
<comment type="alternative products">
    <event type="alternative splicing"/>
    <isoform>
        <id>P08138-1</id>
        <name>1</name>
        <sequence type="displayed"/>
    </isoform>
    <isoform>
        <id>P08138-2</id>
        <name>2</name>
        <sequence type="described" ref="VSP_056850"/>
    </isoform>
</comment>
<comment type="domain">
    <text evidence="2 18">The death domain mediates interaction with RANBP9 (By similarity). It also mediates interaction with ARHGDIA and RIPK2 (PubMed:26646181).</text>
</comment>
<comment type="domain">
    <text evidence="1">The extracellular domain is responsible for interaction with NTRK1.</text>
</comment>
<comment type="PTM">
    <text>N- and O-glycosylated.</text>
</comment>
<comment type="PTM">
    <text>O-linked glycans consist of Gal(1-3)GalNAc core elongated by 1 or 2 NeuNAc.</text>
</comment>
<comment type="PTM">
    <text>Phosphorylated on serine residues.</text>
</comment>